<protein>
    <recommendedName>
        <fullName>Heat shock 70 kDa protein BIP3</fullName>
    </recommendedName>
    <alternativeName>
        <fullName evidence="11">BiP chaperone BIP-L</fullName>
    </alternativeName>
    <alternativeName>
        <fullName evidence="10">Heat shock 70 kDa protein 13</fullName>
    </alternativeName>
    <alternativeName>
        <fullName evidence="10">Heat shock protein 70-13</fullName>
        <shortName evidence="10">AtHsp70-13</shortName>
    </alternativeName>
    <alternativeName>
        <fullName evidence="14">Hsp70 protein BiP chaperone BIP-L</fullName>
    </alternativeName>
    <alternativeName>
        <fullName>Luminal-binding protein 3</fullName>
        <shortName>AtBP3</shortName>
        <shortName evidence="12">BiP3</shortName>
    </alternativeName>
</protein>
<gene>
    <name evidence="12" type="primary">BIP3</name>
    <name evidence="11" type="synonym">BIP-L</name>
    <name evidence="10" type="synonym">HSP70-13</name>
    <name evidence="13" type="synonym">MED37_1</name>
    <name type="synonym">MED37B</name>
    <name evidence="16" type="ordered locus">At1g09080</name>
    <name evidence="17" type="ORF">F7G19.5</name>
</gene>
<proteinExistence type="evidence at protein level"/>
<evidence type="ECO:0000255" key="1"/>
<evidence type="ECO:0000255" key="2">
    <source>
        <dbReference type="PROSITE-ProRule" id="PRU10138"/>
    </source>
</evidence>
<evidence type="ECO:0000256" key="3">
    <source>
        <dbReference type="SAM" id="MobiDB-lite"/>
    </source>
</evidence>
<evidence type="ECO:0000269" key="4">
    <source>
    </source>
</evidence>
<evidence type="ECO:0000269" key="5">
    <source>
    </source>
</evidence>
<evidence type="ECO:0000269" key="6">
    <source>
    </source>
</evidence>
<evidence type="ECO:0000269" key="7">
    <source>
    </source>
</evidence>
<evidence type="ECO:0000269" key="8">
    <source>
    </source>
</evidence>
<evidence type="ECO:0000269" key="9">
    <source>
    </source>
</evidence>
<evidence type="ECO:0000303" key="10">
    <source>
    </source>
</evidence>
<evidence type="ECO:0000303" key="11">
    <source>
    </source>
</evidence>
<evidence type="ECO:0000303" key="12">
    <source>
    </source>
</evidence>
<evidence type="ECO:0000303" key="13">
    <source>
    </source>
</evidence>
<evidence type="ECO:0000305" key="14"/>
<evidence type="ECO:0000305" key="15">
    <source>
    </source>
</evidence>
<evidence type="ECO:0000312" key="16">
    <source>
        <dbReference type="Araport" id="AT1G09080"/>
    </source>
</evidence>
<evidence type="ECO:0000312" key="17">
    <source>
        <dbReference type="EMBL" id="AAB70400.1"/>
    </source>
</evidence>
<comment type="function">
    <text evidence="7 8 9 15">In cooperation with other chaperones, Hsp70s are key components that facilitate folding of de novo synthesized proteins, assist translocation of precursor proteins into organelles, and are responsible for degradation of damaged protein under stress conditions (Probable). Required for pollen development and pollen tube growth (PubMed:24486762). May be required for the early stages of female gametophyte development, but not for polar nuclei fusion during female gametophyte (PubMed:26251880). Possesses ATPase activity in vitro (PubMed:26186593).</text>
</comment>
<comment type="activity regulation">
    <text evidence="8">Binding to ERDJ3A activates the ATPase activity of BIP3.</text>
</comment>
<comment type="subunit">
    <text evidence="6 8">Interacts with BZIP28 (via C-terminus) (PubMed:23624714). Interacts with ERDJ3A (PubMed:26186593).</text>
</comment>
<comment type="subcellular location">
    <subcellularLocation>
        <location evidence="2 6">Endoplasmic reticulum lumen</location>
    </subcellularLocation>
    <subcellularLocation>
        <location evidence="14">Nucleus</location>
    </subcellularLocation>
</comment>
<comment type="alternative products">
    <event type="alternative splicing"/>
    <isoform>
        <id>Q8H1B3-1</id>
        <name>1</name>
        <sequence type="displayed"/>
    </isoform>
    <isoform>
        <id>Q8H1B3-2</id>
        <name>2</name>
        <sequence type="described" ref="VSP_042244"/>
    </isoform>
</comment>
<comment type="tissue specificity">
    <text evidence="7">Expressed in mature pollen grains, and pollen tubes.</text>
</comment>
<comment type="induction">
    <text evidence="4 5">Induced by tunicamycin and DTT.</text>
</comment>
<comment type="disruption phenotype">
    <text evidence="7 8">Bip1, bip2 and bip3 triple mutation is pollen lethal (PubMed:24486762). Bip1, bip2 and bip3 triple mutation affects female gametophyte development during the early stages (PubMed:26186593).</text>
</comment>
<comment type="similarity">
    <text evidence="14">Belongs to the heat shock protein 70 (TC 1.A.33) family. DnaK subfamily.</text>
</comment>
<comment type="sequence caution" evidence="14">
    <conflict type="erroneous gene model prediction">
        <sequence resource="EMBL-CDS" id="AAB70400"/>
    </conflict>
</comment>
<accession>Q8H1B3</accession>
<accession>F4HZD5</accession>
<accession>O04022</accession>
<feature type="signal peptide" evidence="1">
    <location>
        <begin position="1"/>
        <end position="35"/>
    </location>
</feature>
<feature type="chain" id="PRO_0000415430" description="Heat shock 70 kDa protein BIP3">
    <location>
        <begin position="36"/>
        <end position="675"/>
    </location>
</feature>
<feature type="region of interest" description="Disordered" evidence="3">
    <location>
        <begin position="656"/>
        <end position="675"/>
    </location>
</feature>
<feature type="short sequence motif" description="Prevents secretion from ER" evidence="2">
    <location>
        <begin position="673"/>
        <end position="675"/>
    </location>
</feature>
<feature type="compositionally biased region" description="Acidic residues" evidence="3">
    <location>
        <begin position="663"/>
        <end position="675"/>
    </location>
</feature>
<feature type="splice variant" id="VSP_042244" description="In isoform 2." evidence="14">
    <location>
        <begin position="25"/>
        <end position="34"/>
    </location>
</feature>
<reference key="1">
    <citation type="journal article" date="2003" name="Gene">
        <title>Expression of an evolutionarily distinct novel BiP gene during the unfolded protein response in Arabidopsis thaliana.</title>
        <authorList>
            <person name="Noh S.J."/>
            <person name="Kwon C.S."/>
            <person name="Oh D.H."/>
            <person name="Moon J.S."/>
            <person name="Chung W.I."/>
        </authorList>
    </citation>
    <scope>NUCLEOTIDE SEQUENCE [MRNA] (ISOFORM 1)</scope>
    <scope>INDUCTION</scope>
    <source>
        <strain>cv. Columbia</strain>
    </source>
</reference>
<reference key="2">
    <citation type="journal article" date="2000" name="Nature">
        <title>Sequence and analysis of chromosome 1 of the plant Arabidopsis thaliana.</title>
        <authorList>
            <person name="Theologis A."/>
            <person name="Ecker J.R."/>
            <person name="Palm C.J."/>
            <person name="Federspiel N.A."/>
            <person name="Kaul S."/>
            <person name="White O."/>
            <person name="Alonso J."/>
            <person name="Altafi H."/>
            <person name="Araujo R."/>
            <person name="Bowman C.L."/>
            <person name="Brooks S.Y."/>
            <person name="Buehler E."/>
            <person name="Chan A."/>
            <person name="Chao Q."/>
            <person name="Chen H."/>
            <person name="Cheuk R.F."/>
            <person name="Chin C.W."/>
            <person name="Chung M.K."/>
            <person name="Conn L."/>
            <person name="Conway A.B."/>
            <person name="Conway A.R."/>
            <person name="Creasy T.H."/>
            <person name="Dewar K."/>
            <person name="Dunn P."/>
            <person name="Etgu P."/>
            <person name="Feldblyum T.V."/>
            <person name="Feng J.-D."/>
            <person name="Fong B."/>
            <person name="Fujii C.Y."/>
            <person name="Gill J.E."/>
            <person name="Goldsmith A.D."/>
            <person name="Haas B."/>
            <person name="Hansen N.F."/>
            <person name="Hughes B."/>
            <person name="Huizar L."/>
            <person name="Hunter J.L."/>
            <person name="Jenkins J."/>
            <person name="Johnson-Hopson C."/>
            <person name="Khan S."/>
            <person name="Khaykin E."/>
            <person name="Kim C.J."/>
            <person name="Koo H.L."/>
            <person name="Kremenetskaia I."/>
            <person name="Kurtz D.B."/>
            <person name="Kwan A."/>
            <person name="Lam B."/>
            <person name="Langin-Hooper S."/>
            <person name="Lee A."/>
            <person name="Lee J.M."/>
            <person name="Lenz C.A."/>
            <person name="Li J.H."/>
            <person name="Li Y.-P."/>
            <person name="Lin X."/>
            <person name="Liu S.X."/>
            <person name="Liu Z.A."/>
            <person name="Luros J.S."/>
            <person name="Maiti R."/>
            <person name="Marziali A."/>
            <person name="Militscher J."/>
            <person name="Miranda M."/>
            <person name="Nguyen M."/>
            <person name="Nierman W.C."/>
            <person name="Osborne B.I."/>
            <person name="Pai G."/>
            <person name="Peterson J."/>
            <person name="Pham P.K."/>
            <person name="Rizzo M."/>
            <person name="Rooney T."/>
            <person name="Rowley D."/>
            <person name="Sakano H."/>
            <person name="Salzberg S.L."/>
            <person name="Schwartz J.R."/>
            <person name="Shinn P."/>
            <person name="Southwick A.M."/>
            <person name="Sun H."/>
            <person name="Tallon L.J."/>
            <person name="Tambunga G."/>
            <person name="Toriumi M.J."/>
            <person name="Town C.D."/>
            <person name="Utterback T."/>
            <person name="Van Aken S."/>
            <person name="Vaysberg M."/>
            <person name="Vysotskaia V.S."/>
            <person name="Walker M."/>
            <person name="Wu D."/>
            <person name="Yu G."/>
            <person name="Fraser C.M."/>
            <person name="Venter J.C."/>
            <person name="Davis R.W."/>
        </authorList>
    </citation>
    <scope>NUCLEOTIDE SEQUENCE [LARGE SCALE GENOMIC DNA]</scope>
    <source>
        <strain>cv. Columbia</strain>
    </source>
</reference>
<reference key="3">
    <citation type="journal article" date="2017" name="Plant J.">
        <title>Araport11: a complete reannotation of the Arabidopsis thaliana reference genome.</title>
        <authorList>
            <person name="Cheng C.Y."/>
            <person name="Krishnakumar V."/>
            <person name="Chan A.P."/>
            <person name="Thibaud-Nissen F."/>
            <person name="Schobel S."/>
            <person name="Town C.D."/>
        </authorList>
    </citation>
    <scope>GENOME REANNOTATION</scope>
    <source>
        <strain>cv. Columbia</strain>
    </source>
</reference>
<reference key="4">
    <citation type="journal article" date="2001" name="Cell Stress Chaperones">
        <title>Genomic analysis of the Hsp70 superfamily in Arabidopsis thaliana.</title>
        <authorList>
            <person name="Lin B.L."/>
            <person name="Wang J.S."/>
            <person name="Liu H.C."/>
            <person name="Chen R.W."/>
            <person name="Meyer Y."/>
            <person name="Barakat A."/>
            <person name="Delseny M."/>
        </authorList>
    </citation>
    <scope>GENE FAMILY</scope>
    <scope>NOMENCLATURE</scope>
</reference>
<reference key="5">
    <citation type="journal article" date="2001" name="Plant Physiol.">
        <title>Comprehensive expression profile analysis of the Arabidopsis Hsp70 gene family.</title>
        <authorList>
            <person name="Sung D.Y."/>
            <person name="Vierling E."/>
            <person name="Guy C.L."/>
        </authorList>
    </citation>
    <scope>DNAK GENE SUBFAMILY</scope>
</reference>
<reference key="6">
    <citation type="journal article" date="2011" name="Proc. Natl. Acad. Sci. U.S.A.">
        <title>Heat induces the splicing by IRE1 of a mRNA encoding a transcription factor involved in the unfolded protein response in Arabidopsis.</title>
        <authorList>
            <person name="Deng Y."/>
            <person name="Humbert S."/>
            <person name="Liu J.X."/>
            <person name="Srivastava R."/>
            <person name="Rothstein S.J."/>
            <person name="Howell S.H."/>
        </authorList>
    </citation>
    <scope>INDUCTION BY DTT</scope>
</reference>
<reference key="7">
    <citation type="journal article" date="2011" name="Plant Physiol.">
        <title>The Mediator complex in plants: structure, phylogeny, and expression profiling of representative genes in a dicot (Arabidopsis) and a monocot (rice) during reproduction and abiotic stress.</title>
        <authorList>
            <person name="Mathur S."/>
            <person name="Vyas S."/>
            <person name="Kapoor S."/>
            <person name="Tyagi A.K."/>
        </authorList>
    </citation>
    <scope>NOMENCLATURE</scope>
</reference>
<reference key="8">
    <citation type="journal article" date="2013" name="Plant Cell">
        <title>BINDING PROTEIN is a master regulator of the endoplasmic reticulum stress sensor/transducer bZIP28 in Arabidopsis.</title>
        <authorList>
            <person name="Srivastava R."/>
            <person name="Deng Y."/>
            <person name="Shah S."/>
            <person name="Rao A.G."/>
            <person name="Howell S.H."/>
        </authorList>
    </citation>
    <scope>INTERACTION WITH BZIP28</scope>
    <scope>SUBCELLULAR LOCATION</scope>
</reference>
<reference key="9">
    <citation type="journal article" date="2014" name="Plant Cell Physiol.">
        <title>Multiple BiP genes of Arabidopsis thaliana are required for male gametogenesis and pollen competitiveness.</title>
        <authorList>
            <person name="Maruyama D."/>
            <person name="Sugiyama T."/>
            <person name="Endo T."/>
            <person name="Nishikawa S."/>
        </authorList>
    </citation>
    <scope>FUNCTION</scope>
    <scope>TISSUE SPECIFICITY</scope>
    <scope>DISRUPTION PHENOTYPE</scope>
</reference>
<reference key="10">
    <citation type="journal article" date="2015" name="PLoS ONE">
        <title>The THERMOSENSITIVE MALE STERILE 1 interacts with the BiPs via DnaJ domain and stimulates their ATPase enzyme activities in Arabidopsis.</title>
        <authorList>
            <person name="Ma Z.X."/>
            <person name="Leng Y.J."/>
            <person name="Chen G.X."/>
            <person name="Zhou P.M."/>
            <person name="Ye D."/>
            <person name="Chen L.Q."/>
        </authorList>
    </citation>
    <scope>FUNCTION</scope>
    <scope>ACTIVITY REGULATION</scope>
    <scope>INTERACTION WITH ERDJ3A</scope>
</reference>
<reference key="11">
    <citation type="journal article" date="2015" name="Plant Signal. Behav.">
        <title>BiP3 supports the early stages of female gametogenesis in the absence of BiP1 and BiP2 in Arabidopsis thaliana.</title>
        <authorList>
            <person name="Maruyama D."/>
            <person name="Endo T."/>
            <person name="Nishikawa S."/>
        </authorList>
    </citation>
    <scope>FUNCTION</scope>
    <scope>DISRUPTION PHENOTYPE</scope>
</reference>
<dbReference type="EMBL" id="AY156728">
    <property type="protein sequence ID" value="AAN60163.1"/>
    <property type="molecule type" value="mRNA"/>
</dbReference>
<dbReference type="EMBL" id="AC000106">
    <property type="protein sequence ID" value="AAB70400.1"/>
    <property type="status" value="ALT_SEQ"/>
    <property type="molecule type" value="Genomic_DNA"/>
</dbReference>
<dbReference type="EMBL" id="CP002684">
    <property type="protein sequence ID" value="AEE28392.1"/>
    <property type="molecule type" value="Genomic_DNA"/>
</dbReference>
<dbReference type="EMBL" id="CP002684">
    <property type="protein sequence ID" value="AEE28393.1"/>
    <property type="molecule type" value="Genomic_DNA"/>
</dbReference>
<dbReference type="PIR" id="H86222">
    <property type="entry name" value="H86222"/>
</dbReference>
<dbReference type="RefSeq" id="NP_001184944.1">
    <molecule id="Q8H1B3-2"/>
    <property type="nucleotide sequence ID" value="NM_001198015.2"/>
</dbReference>
<dbReference type="RefSeq" id="NP_172382.4">
    <molecule id="Q8H1B3-1"/>
    <property type="nucleotide sequence ID" value="NM_100779.5"/>
</dbReference>
<dbReference type="SMR" id="Q8H1B3"/>
<dbReference type="BioGRID" id="22670">
    <property type="interactions" value="2"/>
</dbReference>
<dbReference type="FunCoup" id="Q8H1B3">
    <property type="interactions" value="2505"/>
</dbReference>
<dbReference type="IntAct" id="Q8H1B3">
    <property type="interactions" value="2"/>
</dbReference>
<dbReference type="MINT" id="Q8H1B3"/>
<dbReference type="STRING" id="3702.Q8H1B3"/>
<dbReference type="iPTMnet" id="Q8H1B3"/>
<dbReference type="PaxDb" id="3702-AT1G09080.1"/>
<dbReference type="ProMEX" id="Q8H1B3"/>
<dbReference type="ProteomicsDB" id="238248">
    <molecule id="Q8H1B3-1"/>
</dbReference>
<dbReference type="EnsemblPlants" id="AT1G09080.1">
    <molecule id="Q8H1B3-1"/>
    <property type="protein sequence ID" value="AT1G09080.1"/>
    <property type="gene ID" value="AT1G09080"/>
</dbReference>
<dbReference type="EnsemblPlants" id="AT1G09080.2">
    <molecule id="Q8H1B3-2"/>
    <property type="protein sequence ID" value="AT1G09080.2"/>
    <property type="gene ID" value="AT1G09080"/>
</dbReference>
<dbReference type="GeneID" id="837429"/>
<dbReference type="Gramene" id="AT1G09080.1">
    <molecule id="Q8H1B3-1"/>
    <property type="protein sequence ID" value="AT1G09080.1"/>
    <property type="gene ID" value="AT1G09080"/>
</dbReference>
<dbReference type="Gramene" id="AT1G09080.2">
    <molecule id="Q8H1B3-2"/>
    <property type="protein sequence ID" value="AT1G09080.2"/>
    <property type="gene ID" value="AT1G09080"/>
</dbReference>
<dbReference type="KEGG" id="ath:AT1G09080"/>
<dbReference type="Araport" id="AT1G09080"/>
<dbReference type="TAIR" id="AT1G09080">
    <property type="gene designation" value="BIP3"/>
</dbReference>
<dbReference type="eggNOG" id="KOG0100">
    <property type="taxonomic scope" value="Eukaryota"/>
</dbReference>
<dbReference type="InParanoid" id="Q8H1B3"/>
<dbReference type="OMA" id="DEYMCLW"/>
<dbReference type="OrthoDB" id="2401965at2759"/>
<dbReference type="PhylomeDB" id="Q8H1B3"/>
<dbReference type="CD-CODE" id="4299E36E">
    <property type="entry name" value="Nucleolus"/>
</dbReference>
<dbReference type="PRO" id="PR:Q8H1B3"/>
<dbReference type="Proteomes" id="UP000006548">
    <property type="component" value="Chromosome 1"/>
</dbReference>
<dbReference type="ExpressionAtlas" id="Q8H1B3">
    <property type="expression patterns" value="baseline and differential"/>
</dbReference>
<dbReference type="GO" id="GO:0005788">
    <property type="term" value="C:endoplasmic reticulum lumen"/>
    <property type="evidence" value="ECO:0007669"/>
    <property type="project" value="UniProtKB-SubCell"/>
</dbReference>
<dbReference type="GO" id="GO:0016592">
    <property type="term" value="C:mediator complex"/>
    <property type="evidence" value="ECO:0000314"/>
    <property type="project" value="UniProtKB"/>
</dbReference>
<dbReference type="GO" id="GO:0099503">
    <property type="term" value="C:secretory vesicle"/>
    <property type="evidence" value="ECO:0007005"/>
    <property type="project" value="TAIR"/>
</dbReference>
<dbReference type="GO" id="GO:0005524">
    <property type="term" value="F:ATP binding"/>
    <property type="evidence" value="ECO:0007669"/>
    <property type="project" value="UniProtKB-KW"/>
</dbReference>
<dbReference type="GO" id="GO:0140662">
    <property type="term" value="F:ATP-dependent protein folding chaperone"/>
    <property type="evidence" value="ECO:0007669"/>
    <property type="project" value="InterPro"/>
</dbReference>
<dbReference type="GO" id="GO:0009860">
    <property type="term" value="P:pollen tube growth"/>
    <property type="evidence" value="ECO:0000270"/>
    <property type="project" value="TAIR"/>
</dbReference>
<dbReference type="GO" id="GO:0000304">
    <property type="term" value="P:response to singlet oxygen"/>
    <property type="evidence" value="ECO:0000315"/>
    <property type="project" value="TAIR"/>
</dbReference>
<dbReference type="CDD" id="cd10241">
    <property type="entry name" value="ASKHA_NBD_HSP70_BiP"/>
    <property type="match status" value="1"/>
</dbReference>
<dbReference type="FunFam" id="2.60.34.10:FF:000002">
    <property type="entry name" value="Heat shock 70 kDa"/>
    <property type="match status" value="1"/>
</dbReference>
<dbReference type="FunFam" id="3.90.640.10:FF:000002">
    <property type="entry name" value="Heat shock 70 kDa"/>
    <property type="match status" value="1"/>
</dbReference>
<dbReference type="FunFam" id="3.30.420.40:FF:000172">
    <property type="entry name" value="Heat shock 70 kDa protein"/>
    <property type="match status" value="1"/>
</dbReference>
<dbReference type="FunFam" id="3.30.420.40:FF:000026">
    <property type="entry name" value="Heat shock protein 70"/>
    <property type="match status" value="1"/>
</dbReference>
<dbReference type="FunFam" id="3.30.30.30:FF:000005">
    <property type="entry name" value="Heat shock protein ssb1"/>
    <property type="match status" value="1"/>
</dbReference>
<dbReference type="Gene3D" id="1.20.1270.10">
    <property type="match status" value="1"/>
</dbReference>
<dbReference type="Gene3D" id="3.30.420.40">
    <property type="match status" value="2"/>
</dbReference>
<dbReference type="Gene3D" id="3.90.640.10">
    <property type="entry name" value="Actin, Chain A, domain 4"/>
    <property type="match status" value="1"/>
</dbReference>
<dbReference type="Gene3D" id="2.60.34.10">
    <property type="entry name" value="Substrate Binding Domain Of DNAk, Chain A, domain 1"/>
    <property type="match status" value="1"/>
</dbReference>
<dbReference type="InterPro" id="IPR043129">
    <property type="entry name" value="ATPase_NBD"/>
</dbReference>
<dbReference type="InterPro" id="IPR042050">
    <property type="entry name" value="BIP_NBD"/>
</dbReference>
<dbReference type="InterPro" id="IPR018181">
    <property type="entry name" value="Heat_shock_70_CS"/>
</dbReference>
<dbReference type="InterPro" id="IPR029048">
    <property type="entry name" value="HSP70_C_sf"/>
</dbReference>
<dbReference type="InterPro" id="IPR029047">
    <property type="entry name" value="HSP70_peptide-bd_sf"/>
</dbReference>
<dbReference type="InterPro" id="IPR013126">
    <property type="entry name" value="Hsp_70_fam"/>
</dbReference>
<dbReference type="NCBIfam" id="NF001413">
    <property type="entry name" value="PRK00290.1"/>
    <property type="match status" value="1"/>
</dbReference>
<dbReference type="PANTHER" id="PTHR19375">
    <property type="entry name" value="HEAT SHOCK PROTEIN 70KDA"/>
    <property type="match status" value="1"/>
</dbReference>
<dbReference type="Pfam" id="PF00012">
    <property type="entry name" value="HSP70"/>
    <property type="match status" value="1"/>
</dbReference>
<dbReference type="PRINTS" id="PR00301">
    <property type="entry name" value="HEATSHOCK70"/>
</dbReference>
<dbReference type="SUPFAM" id="SSF53067">
    <property type="entry name" value="Actin-like ATPase domain"/>
    <property type="match status" value="2"/>
</dbReference>
<dbReference type="SUPFAM" id="SSF100934">
    <property type="entry name" value="Heat shock protein 70kD (HSP70), C-terminal subdomain"/>
    <property type="match status" value="1"/>
</dbReference>
<dbReference type="SUPFAM" id="SSF100920">
    <property type="entry name" value="Heat shock protein 70kD (HSP70), peptide-binding domain"/>
    <property type="match status" value="1"/>
</dbReference>
<dbReference type="PROSITE" id="PS00014">
    <property type="entry name" value="ER_TARGET"/>
    <property type="match status" value="1"/>
</dbReference>
<dbReference type="PROSITE" id="PS00297">
    <property type="entry name" value="HSP70_1"/>
    <property type="match status" value="1"/>
</dbReference>
<dbReference type="PROSITE" id="PS00329">
    <property type="entry name" value="HSP70_2"/>
    <property type="match status" value="1"/>
</dbReference>
<dbReference type="PROSITE" id="PS01036">
    <property type="entry name" value="HSP70_3"/>
    <property type="match status" value="1"/>
</dbReference>
<name>BIP3_ARATH</name>
<sequence>MIFIKENTAKMTRNKAIACLVFLTVLDFLMNIGAALMSSLAIEGEEQKLGTVIGIDLGTTYSCVGVYHNKHVEIIANDQGNRITPSWVAFTDTERLIGEAAKNQAAKNPERTIFDPKRLIGRKFDDPDVQRDIKFLPYKVVNKDGKPYIQVKVKGEEKLFSPEEISAMILTKMKETAEAFLGKKIKDAVITVPAYFNDAQRQATKDAGAIAGLNVVRIINEPTGAAIAYGLDKKGGESNILVYDLGGGTFDVSILTIDNGVFEVLSTSGDTHLGGEDFDHRVMDYFIKLVKKKYNKDISKDHKALGKLRRECELAKRSLSNQHQVRVEIESLFDGVDFSEPLTRARFEELNMDLFKKTMEPVKKALKDAGLKKSDIDEIVLVGGSTRIPKVQQMLKDFFDGKEPSKGTNPDEAVAYGAAVQGGVLSGEGGEETQNILLLDVAPLSLGIETVGGVMTNIIPRNTVIPTKKSQVFTTYQDQQTTVTINVYEGERSMTKDNRELGKFDLTGILPAPRGVPQIEVTFEVDANGILQVKAEDKVAKTSQSITITNDKGRLTEEEIEEMIREAEEFAEEDKIMKEKIDARNKLETYVYNMKSTVADKEKLAKKISDEDKEKMEGVLKEALEWLEENVNAEKEDYDEKLKEVELVCDPVIKSVYEKTEGENEDDDGDDHDEL</sequence>
<keyword id="KW-0025">Alternative splicing</keyword>
<keyword id="KW-0067">ATP-binding</keyword>
<keyword id="KW-0143">Chaperone</keyword>
<keyword id="KW-0256">Endoplasmic reticulum</keyword>
<keyword id="KW-0547">Nucleotide-binding</keyword>
<keyword id="KW-0539">Nucleus</keyword>
<keyword id="KW-1185">Reference proteome</keyword>
<keyword id="KW-0732">Signal</keyword>
<keyword id="KW-0804">Transcription</keyword>
<keyword id="KW-0805">Transcription regulation</keyword>
<organism>
    <name type="scientific">Arabidopsis thaliana</name>
    <name type="common">Mouse-ear cress</name>
    <dbReference type="NCBI Taxonomy" id="3702"/>
    <lineage>
        <taxon>Eukaryota</taxon>
        <taxon>Viridiplantae</taxon>
        <taxon>Streptophyta</taxon>
        <taxon>Embryophyta</taxon>
        <taxon>Tracheophyta</taxon>
        <taxon>Spermatophyta</taxon>
        <taxon>Magnoliopsida</taxon>
        <taxon>eudicotyledons</taxon>
        <taxon>Gunneridae</taxon>
        <taxon>Pentapetalae</taxon>
        <taxon>rosids</taxon>
        <taxon>malvids</taxon>
        <taxon>Brassicales</taxon>
        <taxon>Brassicaceae</taxon>
        <taxon>Camelineae</taxon>
        <taxon>Arabidopsis</taxon>
    </lineage>
</organism>